<feature type="chain" id="PRO_0000403232" description="Cyanate hydratase">
    <location>
        <begin position="1"/>
        <end position="193"/>
    </location>
</feature>
<feature type="active site" evidence="1">
    <location>
        <position position="121"/>
    </location>
</feature>
<feature type="active site" evidence="1">
    <location>
        <position position="124"/>
    </location>
</feature>
<feature type="active site" evidence="1">
    <location>
        <position position="147"/>
    </location>
</feature>
<reference key="1">
    <citation type="journal article" date="2008" name="Nature">
        <title>The Phaeodactylum genome reveals the evolutionary history of diatom genomes.</title>
        <authorList>
            <person name="Bowler C."/>
            <person name="Allen A.E."/>
            <person name="Badger J.H."/>
            <person name="Grimwood J."/>
            <person name="Jabbari K."/>
            <person name="Kuo A."/>
            <person name="Maheswari U."/>
            <person name="Martens C."/>
            <person name="Maumus F."/>
            <person name="Otillar R.P."/>
            <person name="Rayko E."/>
            <person name="Salamov A."/>
            <person name="Vandepoele K."/>
            <person name="Beszteri B."/>
            <person name="Gruber A."/>
            <person name="Heijde M."/>
            <person name="Katinka M."/>
            <person name="Mock T."/>
            <person name="Valentin K."/>
            <person name="Verret F."/>
            <person name="Berges J.A."/>
            <person name="Brownlee C."/>
            <person name="Cadoret J.P."/>
            <person name="Chiovitti A."/>
            <person name="Choi C.J."/>
            <person name="Coesel S."/>
            <person name="De Martino A."/>
            <person name="Detter J.C."/>
            <person name="Durkin C."/>
            <person name="Falciatore A."/>
            <person name="Fournet J."/>
            <person name="Haruta M."/>
            <person name="Huysman M.J."/>
            <person name="Jenkins B.D."/>
            <person name="Jiroutova K."/>
            <person name="Jorgensen R.E."/>
            <person name="Joubert Y."/>
            <person name="Kaplan A."/>
            <person name="Kroger N."/>
            <person name="Kroth P.G."/>
            <person name="La Roche J."/>
            <person name="Lindquist E."/>
            <person name="Lommer M."/>
            <person name="Martin-Jezequel V."/>
            <person name="Lopez P.J."/>
            <person name="Lucas S."/>
            <person name="Mangogna M."/>
            <person name="McGinnis K."/>
            <person name="Medlin L.K."/>
            <person name="Montsant A."/>
            <person name="Oudot-Le Secq M.P."/>
            <person name="Napoli C."/>
            <person name="Obornik M."/>
            <person name="Parker M.S."/>
            <person name="Petit J.L."/>
            <person name="Porcel B.M."/>
            <person name="Poulsen N."/>
            <person name="Robison M."/>
            <person name="Rychlewski L."/>
            <person name="Rynearson T.A."/>
            <person name="Schmutz J."/>
            <person name="Shapiro H."/>
            <person name="Siaut M."/>
            <person name="Stanley M."/>
            <person name="Sussman M.R."/>
            <person name="Taylor A.R."/>
            <person name="Vardi A."/>
            <person name="von Dassow P."/>
            <person name="Vyverman W."/>
            <person name="Willis A."/>
            <person name="Wyrwicz L.S."/>
            <person name="Rokhsar D.S."/>
            <person name="Weissenbach J."/>
            <person name="Armbrust E.V."/>
            <person name="Green B.R."/>
            <person name="Van de Peer Y."/>
            <person name="Grigoriev I.V."/>
        </authorList>
    </citation>
    <scope>NUCLEOTIDE SEQUENCE [LARGE SCALE GENOMIC DNA]</scope>
    <source>
        <strain>CCAP 1055/1</strain>
    </source>
</reference>
<reference key="2">
    <citation type="submission" date="2008-08" db="EMBL/GenBank/DDBJ databases">
        <authorList>
            <consortium name="Diatom Consortium"/>
            <person name="Grigoriev I."/>
            <person name="Grimwood J."/>
            <person name="Kuo A."/>
            <person name="Otillar R.P."/>
            <person name="Salamov A."/>
            <person name="Detter J.C."/>
            <person name="Lindquist E."/>
            <person name="Shapiro H."/>
            <person name="Lucas S."/>
            <person name="Glavina del Rio T."/>
            <person name="Pitluck S."/>
            <person name="Rokhsar D."/>
            <person name="Bowler C."/>
        </authorList>
    </citation>
    <scope>GENOME REANNOTATION</scope>
    <source>
        <strain>CCAP 1055/1</strain>
    </source>
</reference>
<comment type="function">
    <text evidence="1">Catalyzes the reaction of cyanate with bicarbonate to produce ammonia and carbon dioxide.</text>
</comment>
<comment type="catalytic activity">
    <reaction evidence="1">
        <text>cyanate + hydrogencarbonate + 3 H(+) = NH4(+) + 2 CO2</text>
        <dbReference type="Rhea" id="RHEA:11120"/>
        <dbReference type="ChEBI" id="CHEBI:15378"/>
        <dbReference type="ChEBI" id="CHEBI:16526"/>
        <dbReference type="ChEBI" id="CHEBI:17544"/>
        <dbReference type="ChEBI" id="CHEBI:28938"/>
        <dbReference type="ChEBI" id="CHEBI:29195"/>
        <dbReference type="EC" id="4.2.1.104"/>
    </reaction>
</comment>
<comment type="similarity">
    <text evidence="1">Belongs to the cyanase family.</text>
</comment>
<proteinExistence type="inferred from homology"/>
<gene>
    <name evidence="1" type="primary">CYN</name>
    <name type="ORF">PHATRDRAFT_17187</name>
</gene>
<accession>B7FRE8</accession>
<protein>
    <recommendedName>
        <fullName evidence="1">Cyanate hydratase</fullName>
        <shortName evidence="1">Cyanase</shortName>
        <ecNumber evidence="1">4.2.1.104</ecNumber>
    </recommendedName>
    <alternativeName>
        <fullName evidence="1">Cyanate hydrolase</fullName>
    </alternativeName>
    <alternativeName>
        <fullName evidence="1">Cyanate lyase</fullName>
    </alternativeName>
</protein>
<sequence>MLSQLPRAAIRLLPRRQPNLHCYRYHSKPTSLTAQAGRVHRVLSAKADSNLTYDDLATCLGVTNTYAAQLLLGQAKLTPETAKKLRAALPAVSDDDLEDMQNSFPMRSYDDEILKEPHVYRTYEAITHYGEAMKAIINEQCGDGIMSAIDFYCDVGTSIGKHGEKRVVITFNGKFLPFIEQKAEDNGAMSPRD</sequence>
<evidence type="ECO:0000255" key="1">
    <source>
        <dbReference type="HAMAP-Rule" id="MF_03139"/>
    </source>
</evidence>
<keyword id="KW-0456">Lyase</keyword>
<keyword id="KW-1185">Reference proteome</keyword>
<dbReference type="EC" id="4.2.1.104" evidence="1"/>
<dbReference type="EMBL" id="CM000605">
    <property type="protein sequence ID" value="EEC51492.1"/>
    <property type="molecule type" value="Genomic_DNA"/>
</dbReference>
<dbReference type="RefSeq" id="XP_002177029.1">
    <property type="nucleotide sequence ID" value="XM_002176993.1"/>
</dbReference>
<dbReference type="SMR" id="B7FRE8"/>
<dbReference type="STRING" id="556484.B7FRE8"/>
<dbReference type="PaxDb" id="2850-Phatr17187"/>
<dbReference type="EnsemblProtists" id="Phatr3_EG02451.t1">
    <property type="protein sequence ID" value="Phatr3_EG02451.p1"/>
    <property type="gene ID" value="Phatr3_EG02451"/>
</dbReference>
<dbReference type="GeneID" id="7196040"/>
<dbReference type="KEGG" id="pti:PHATRDRAFT_17187"/>
<dbReference type="eggNOG" id="ENOG502RY7W">
    <property type="taxonomic scope" value="Eukaryota"/>
</dbReference>
<dbReference type="HOGENOM" id="CLU_103452_2_0_1"/>
<dbReference type="InParanoid" id="B7FRE8"/>
<dbReference type="OMA" id="YELVMIN"/>
<dbReference type="OrthoDB" id="10019422at2759"/>
<dbReference type="Proteomes" id="UP000000759">
    <property type="component" value="Chromosome 1"/>
</dbReference>
<dbReference type="GO" id="GO:0008824">
    <property type="term" value="F:cyanate hydratase activity"/>
    <property type="evidence" value="ECO:0007669"/>
    <property type="project" value="UniProtKB-UniRule"/>
</dbReference>
<dbReference type="GO" id="GO:0003677">
    <property type="term" value="F:DNA binding"/>
    <property type="evidence" value="ECO:0007669"/>
    <property type="project" value="InterPro"/>
</dbReference>
<dbReference type="GO" id="GO:0009439">
    <property type="term" value="P:cyanate metabolic process"/>
    <property type="evidence" value="ECO:0007669"/>
    <property type="project" value="UniProtKB-UniRule"/>
</dbReference>
<dbReference type="CDD" id="cd00093">
    <property type="entry name" value="HTH_XRE"/>
    <property type="match status" value="1"/>
</dbReference>
<dbReference type="Gene3D" id="3.30.1160.10">
    <property type="entry name" value="Cyanate lyase, C-terminal domain"/>
    <property type="match status" value="1"/>
</dbReference>
<dbReference type="Gene3D" id="1.10.260.40">
    <property type="entry name" value="lambda repressor-like DNA-binding domains"/>
    <property type="match status" value="1"/>
</dbReference>
<dbReference type="HAMAP" id="MF_00535">
    <property type="entry name" value="Cyanate_hydrat"/>
    <property type="match status" value="1"/>
</dbReference>
<dbReference type="InterPro" id="IPR001387">
    <property type="entry name" value="Cro/C1-type_HTH"/>
</dbReference>
<dbReference type="InterPro" id="IPR008076">
    <property type="entry name" value="Cyanase"/>
</dbReference>
<dbReference type="InterPro" id="IPR003712">
    <property type="entry name" value="Cyanate_lyase_C"/>
</dbReference>
<dbReference type="InterPro" id="IPR036581">
    <property type="entry name" value="Cyanate_lyase_C_sf"/>
</dbReference>
<dbReference type="InterPro" id="IPR048564">
    <property type="entry name" value="CYNS_N"/>
</dbReference>
<dbReference type="InterPro" id="IPR010982">
    <property type="entry name" value="Lambda_DNA-bd_dom_sf"/>
</dbReference>
<dbReference type="PANTHER" id="PTHR34186">
    <property type="entry name" value="CYANATE HYDRATASE"/>
    <property type="match status" value="1"/>
</dbReference>
<dbReference type="PANTHER" id="PTHR34186:SF2">
    <property type="entry name" value="CYANATE HYDRATASE"/>
    <property type="match status" value="1"/>
</dbReference>
<dbReference type="Pfam" id="PF02560">
    <property type="entry name" value="Cyanate_lyase"/>
    <property type="match status" value="1"/>
</dbReference>
<dbReference type="Pfam" id="PF21291">
    <property type="entry name" value="CYNS_N"/>
    <property type="match status" value="1"/>
</dbReference>
<dbReference type="PRINTS" id="PR01693">
    <property type="entry name" value="CYANASE"/>
</dbReference>
<dbReference type="SMART" id="SM01116">
    <property type="entry name" value="Cyanate_lyase"/>
    <property type="match status" value="1"/>
</dbReference>
<dbReference type="SUPFAM" id="SSF55234">
    <property type="entry name" value="Cyanase C-terminal domain"/>
    <property type="match status" value="1"/>
</dbReference>
<dbReference type="SUPFAM" id="SSF47413">
    <property type="entry name" value="lambda repressor-like DNA-binding domains"/>
    <property type="match status" value="1"/>
</dbReference>
<organism>
    <name type="scientific">Phaeodactylum tricornutum (strain CCAP 1055/1)</name>
    <dbReference type="NCBI Taxonomy" id="556484"/>
    <lineage>
        <taxon>Eukaryota</taxon>
        <taxon>Sar</taxon>
        <taxon>Stramenopiles</taxon>
        <taxon>Ochrophyta</taxon>
        <taxon>Bacillariophyta</taxon>
        <taxon>Bacillariophyceae</taxon>
        <taxon>Bacillariophycidae</taxon>
        <taxon>Naviculales</taxon>
        <taxon>Phaeodactylaceae</taxon>
        <taxon>Phaeodactylum</taxon>
    </lineage>
</organism>
<name>CYNS_PHATC</name>